<protein>
    <recommendedName>
        <fullName>Acetyl-coenzyme A synthetase 1</fullName>
        <ecNumber>6.2.1.1</ecNumber>
    </recommendedName>
    <alternativeName>
        <fullName>Acetate--CoA ligase 1</fullName>
    </alternativeName>
    <alternativeName>
        <fullName>Acyl-activating enzyme 1</fullName>
    </alternativeName>
</protein>
<proteinExistence type="inferred from homology"/>
<comment type="catalytic activity">
    <reaction>
        <text>acetate + ATP + CoA = acetyl-CoA + AMP + diphosphate</text>
        <dbReference type="Rhea" id="RHEA:23176"/>
        <dbReference type="ChEBI" id="CHEBI:30089"/>
        <dbReference type="ChEBI" id="CHEBI:30616"/>
        <dbReference type="ChEBI" id="CHEBI:33019"/>
        <dbReference type="ChEBI" id="CHEBI:57287"/>
        <dbReference type="ChEBI" id="CHEBI:57288"/>
        <dbReference type="ChEBI" id="CHEBI:456215"/>
        <dbReference type="EC" id="6.2.1.1"/>
    </reaction>
</comment>
<comment type="similarity">
    <text evidence="2">Belongs to the ATP-dependent AMP-binding enzyme family.</text>
</comment>
<reference key="1">
    <citation type="journal article" date="2004" name="Nature">
        <title>Genome evolution in yeasts.</title>
        <authorList>
            <person name="Dujon B."/>
            <person name="Sherman D."/>
            <person name="Fischer G."/>
            <person name="Durrens P."/>
            <person name="Casaregola S."/>
            <person name="Lafontaine I."/>
            <person name="de Montigny J."/>
            <person name="Marck C."/>
            <person name="Neuveglise C."/>
            <person name="Talla E."/>
            <person name="Goffard N."/>
            <person name="Frangeul L."/>
            <person name="Aigle M."/>
            <person name="Anthouard V."/>
            <person name="Babour A."/>
            <person name="Barbe V."/>
            <person name="Barnay S."/>
            <person name="Blanchin S."/>
            <person name="Beckerich J.-M."/>
            <person name="Beyne E."/>
            <person name="Bleykasten C."/>
            <person name="Boisrame A."/>
            <person name="Boyer J."/>
            <person name="Cattolico L."/>
            <person name="Confanioleri F."/>
            <person name="de Daruvar A."/>
            <person name="Despons L."/>
            <person name="Fabre E."/>
            <person name="Fairhead C."/>
            <person name="Ferry-Dumazet H."/>
            <person name="Groppi A."/>
            <person name="Hantraye F."/>
            <person name="Hennequin C."/>
            <person name="Jauniaux N."/>
            <person name="Joyet P."/>
            <person name="Kachouri R."/>
            <person name="Kerrest A."/>
            <person name="Koszul R."/>
            <person name="Lemaire M."/>
            <person name="Lesur I."/>
            <person name="Ma L."/>
            <person name="Muller H."/>
            <person name="Nicaud J.-M."/>
            <person name="Nikolski M."/>
            <person name="Oztas S."/>
            <person name="Ozier-Kalogeropoulos O."/>
            <person name="Pellenz S."/>
            <person name="Potier S."/>
            <person name="Richard G.-F."/>
            <person name="Straub M.-L."/>
            <person name="Suleau A."/>
            <person name="Swennen D."/>
            <person name="Tekaia F."/>
            <person name="Wesolowski-Louvel M."/>
            <person name="Westhof E."/>
            <person name="Wirth B."/>
            <person name="Zeniou-Meyer M."/>
            <person name="Zivanovic Y."/>
            <person name="Bolotin-Fukuhara M."/>
            <person name="Thierry A."/>
            <person name="Bouchier C."/>
            <person name="Caudron B."/>
            <person name="Scarpelli C."/>
            <person name="Gaillardin C."/>
            <person name="Weissenbach J."/>
            <person name="Wincker P."/>
            <person name="Souciet J.-L."/>
        </authorList>
    </citation>
    <scope>NUCLEOTIDE SEQUENCE [LARGE SCALE GENOMIC DNA]</scope>
    <source>
        <strain>ATCC 36239 / CBS 767 / BCRC 21394 / JCM 1990 / NBRC 0083 / IGC 2968</strain>
    </source>
</reference>
<organism>
    <name type="scientific">Debaryomyces hansenii (strain ATCC 36239 / CBS 767 / BCRC 21394 / JCM 1990 / NBRC 0083 / IGC 2968)</name>
    <name type="common">Yeast</name>
    <name type="synonym">Torulaspora hansenii</name>
    <dbReference type="NCBI Taxonomy" id="284592"/>
    <lineage>
        <taxon>Eukaryota</taxon>
        <taxon>Fungi</taxon>
        <taxon>Dikarya</taxon>
        <taxon>Ascomycota</taxon>
        <taxon>Saccharomycotina</taxon>
        <taxon>Pichiomycetes</taxon>
        <taxon>Debaryomycetaceae</taxon>
        <taxon>Debaryomyces</taxon>
    </lineage>
</organism>
<sequence length="671" mass="74416">MTPHSTHVTLDHEGIIQPPAEFKERSKSKPNLADFETYSKMYKESIENPSKFFGEQALEHLSWDRPFDEARYPVSSEQDFADGDIASWFVNGQLNASYNAVDRWAIKNPNKPAIIYEADEENEGRIITYGQLLKDVCKLAQCLTKLGIRKGDSVAVYLPMIPEALVTLLAIVRIGAVHSVVFAGFSSSSLKDRILDASSKIVITTDESKRGGKTIETKKIVDDALKNCPDVTNVLLFKRTGNAHIPFTEGRDLWWHEEMAKYGPYFPPVPVNSEDPLFLLYTSGSTGKPKGIQHSTAGYLLGAAMTSKYTFDVHEDDVLFTAGDVGWITGHTYVVYGPLLCGATTVVFEGTPAHPNYSRYWEIVDKYQVTQFYVAPTALRLLKRAGTKYIENYKLDSLRVLGSVGEPIAAEIWHWYNDNIGRRKCHIVDTYWQTESGSHMLAPLAGITPTKPGSASLPCFGIDAKILDPVSGKELKENDVEGVLCVKSCWPSISRGIYNDYARFIETYLKPYPNHYFSGDGAARDVDGFYWILGRVDDVVNVSGHRLSTAEIEAALILHESVAECAVVGYADELTGQAVAAYVSLKSNVSEDLEVIKKELILTVRKEIGPFATPKTILLVDDLPKTRSGKIMRRILRKVLAGEEDQLGDISTLSNPGVVAQIIDVVKATRK</sequence>
<name>ACS1_DEBHA</name>
<feature type="chain" id="PRO_0000208411" description="Acetyl-coenzyme A synthetase 1">
    <location>
        <begin position="1"/>
        <end position="671"/>
    </location>
</feature>
<feature type="binding site" evidence="1">
    <location>
        <begin position="210"/>
        <end position="213"/>
    </location>
    <ligand>
        <name>CoA</name>
        <dbReference type="ChEBI" id="CHEBI:57287"/>
    </ligand>
</feature>
<feature type="binding site" evidence="1">
    <location>
        <position position="329"/>
    </location>
    <ligand>
        <name>CoA</name>
        <dbReference type="ChEBI" id="CHEBI:57287"/>
    </ligand>
</feature>
<feature type="binding site" evidence="1">
    <location>
        <begin position="405"/>
        <end position="407"/>
    </location>
    <ligand>
        <name>ATP</name>
        <dbReference type="ChEBI" id="CHEBI:30616"/>
    </ligand>
</feature>
<feature type="binding site" evidence="1">
    <location>
        <begin position="429"/>
        <end position="434"/>
    </location>
    <ligand>
        <name>ATP</name>
        <dbReference type="ChEBI" id="CHEBI:30616"/>
    </ligand>
</feature>
<feature type="binding site" evidence="1">
    <location>
        <position position="520"/>
    </location>
    <ligand>
        <name>ATP</name>
        <dbReference type="ChEBI" id="CHEBI:30616"/>
    </ligand>
</feature>
<feature type="binding site" evidence="1">
    <location>
        <position position="535"/>
    </location>
    <ligand>
        <name>ATP</name>
        <dbReference type="ChEBI" id="CHEBI:30616"/>
    </ligand>
</feature>
<feature type="binding site" evidence="1">
    <location>
        <position position="543"/>
    </location>
    <ligand>
        <name>CoA</name>
        <dbReference type="ChEBI" id="CHEBI:57287"/>
    </ligand>
</feature>
<feature type="binding site" evidence="1">
    <location>
        <position position="546"/>
    </location>
    <ligand>
        <name>ATP</name>
        <dbReference type="ChEBI" id="CHEBI:30616"/>
    </ligand>
</feature>
<feature type="binding site" evidence="1">
    <location>
        <position position="605"/>
    </location>
    <ligand>
        <name>CoA</name>
        <dbReference type="ChEBI" id="CHEBI:57287"/>
    </ligand>
</feature>
<dbReference type="EC" id="6.2.1.1"/>
<dbReference type="EMBL" id="CR382137">
    <property type="protein sequence ID" value="CAG87795.1"/>
    <property type="molecule type" value="Genomic_DNA"/>
</dbReference>
<dbReference type="RefSeq" id="XP_459568.1">
    <property type="nucleotide sequence ID" value="XM_459568.1"/>
</dbReference>
<dbReference type="SMR" id="Q6BQF2"/>
<dbReference type="FunCoup" id="Q6BQF2">
    <property type="interactions" value="526"/>
</dbReference>
<dbReference type="STRING" id="284592.Q6BQF2"/>
<dbReference type="GeneID" id="2901869"/>
<dbReference type="KEGG" id="dha:DEHA2E05676g"/>
<dbReference type="VEuPathDB" id="FungiDB:DEHA2E05676g"/>
<dbReference type="eggNOG" id="KOG1175">
    <property type="taxonomic scope" value="Eukaryota"/>
</dbReference>
<dbReference type="HOGENOM" id="CLU_000022_3_6_1"/>
<dbReference type="InParanoid" id="Q6BQF2"/>
<dbReference type="OMA" id="AIKASWP"/>
<dbReference type="OrthoDB" id="1706066at2759"/>
<dbReference type="Proteomes" id="UP000000599">
    <property type="component" value="Chromosome E"/>
</dbReference>
<dbReference type="GO" id="GO:0005829">
    <property type="term" value="C:cytosol"/>
    <property type="evidence" value="ECO:0007669"/>
    <property type="project" value="TreeGrafter"/>
</dbReference>
<dbReference type="GO" id="GO:0003987">
    <property type="term" value="F:acetate-CoA ligase activity"/>
    <property type="evidence" value="ECO:0007669"/>
    <property type="project" value="UniProtKB-EC"/>
</dbReference>
<dbReference type="GO" id="GO:0016208">
    <property type="term" value="F:AMP binding"/>
    <property type="evidence" value="ECO:0007669"/>
    <property type="project" value="InterPro"/>
</dbReference>
<dbReference type="GO" id="GO:0005524">
    <property type="term" value="F:ATP binding"/>
    <property type="evidence" value="ECO:0007669"/>
    <property type="project" value="UniProtKB-KW"/>
</dbReference>
<dbReference type="GO" id="GO:0019427">
    <property type="term" value="P:acetyl-CoA biosynthetic process from acetate"/>
    <property type="evidence" value="ECO:0007669"/>
    <property type="project" value="InterPro"/>
</dbReference>
<dbReference type="CDD" id="cd05966">
    <property type="entry name" value="ACS"/>
    <property type="match status" value="1"/>
</dbReference>
<dbReference type="FunFam" id="3.30.300.30:FF:000004">
    <property type="entry name" value="Acetyl-coenzyme A synthetase"/>
    <property type="match status" value="1"/>
</dbReference>
<dbReference type="FunFam" id="3.40.50.12780:FF:000001">
    <property type="entry name" value="Acetyl-coenzyme A synthetase"/>
    <property type="match status" value="1"/>
</dbReference>
<dbReference type="Gene3D" id="3.30.300.30">
    <property type="match status" value="1"/>
</dbReference>
<dbReference type="Gene3D" id="3.40.50.12780">
    <property type="entry name" value="N-terminal domain of ligase-like"/>
    <property type="match status" value="1"/>
</dbReference>
<dbReference type="InterPro" id="IPR011904">
    <property type="entry name" value="Ac_CoA_lig"/>
</dbReference>
<dbReference type="InterPro" id="IPR032387">
    <property type="entry name" value="ACAS_N"/>
</dbReference>
<dbReference type="InterPro" id="IPR025110">
    <property type="entry name" value="AMP-bd_C"/>
</dbReference>
<dbReference type="InterPro" id="IPR045851">
    <property type="entry name" value="AMP-bd_C_sf"/>
</dbReference>
<dbReference type="InterPro" id="IPR020845">
    <property type="entry name" value="AMP-binding_CS"/>
</dbReference>
<dbReference type="InterPro" id="IPR000873">
    <property type="entry name" value="AMP-dep_synth/lig_dom"/>
</dbReference>
<dbReference type="InterPro" id="IPR042099">
    <property type="entry name" value="ANL_N_sf"/>
</dbReference>
<dbReference type="NCBIfam" id="TIGR02188">
    <property type="entry name" value="Ac_CoA_lig_AcsA"/>
    <property type="match status" value="1"/>
</dbReference>
<dbReference type="NCBIfam" id="NF001208">
    <property type="entry name" value="PRK00174.1"/>
    <property type="match status" value="1"/>
</dbReference>
<dbReference type="PANTHER" id="PTHR24095">
    <property type="entry name" value="ACETYL-COENZYME A SYNTHETASE"/>
    <property type="match status" value="1"/>
</dbReference>
<dbReference type="PANTHER" id="PTHR24095:SF14">
    <property type="entry name" value="ACETYL-COENZYME A SYNTHETASE 1"/>
    <property type="match status" value="1"/>
</dbReference>
<dbReference type="Pfam" id="PF16177">
    <property type="entry name" value="ACAS_N"/>
    <property type="match status" value="1"/>
</dbReference>
<dbReference type="Pfam" id="PF00501">
    <property type="entry name" value="AMP-binding"/>
    <property type="match status" value="1"/>
</dbReference>
<dbReference type="Pfam" id="PF13193">
    <property type="entry name" value="AMP-binding_C"/>
    <property type="match status" value="1"/>
</dbReference>
<dbReference type="SUPFAM" id="SSF56801">
    <property type="entry name" value="Acetyl-CoA synthetase-like"/>
    <property type="match status" value="1"/>
</dbReference>
<dbReference type="PROSITE" id="PS00455">
    <property type="entry name" value="AMP_BINDING"/>
    <property type="match status" value="1"/>
</dbReference>
<evidence type="ECO:0000250" key="1"/>
<evidence type="ECO:0000305" key="2"/>
<gene>
    <name type="primary">ACS1</name>
    <name type="ordered locus">DEHA2E05676g</name>
</gene>
<accession>Q6BQF2</accession>
<keyword id="KW-0067">ATP-binding</keyword>
<keyword id="KW-0436">Ligase</keyword>
<keyword id="KW-0547">Nucleotide-binding</keyword>
<keyword id="KW-1185">Reference proteome</keyword>